<feature type="chain" id="PRO_0000336426" description="Thiamine-phosphate synthase">
    <location>
        <begin position="1"/>
        <end position="227"/>
    </location>
</feature>
<feature type="binding site" evidence="1">
    <location>
        <begin position="50"/>
        <end position="54"/>
    </location>
    <ligand>
        <name>4-amino-2-methyl-5-(diphosphooxymethyl)pyrimidine</name>
        <dbReference type="ChEBI" id="CHEBI:57841"/>
    </ligand>
</feature>
<feature type="binding site" evidence="1">
    <location>
        <position position="82"/>
    </location>
    <ligand>
        <name>4-amino-2-methyl-5-(diphosphooxymethyl)pyrimidine</name>
        <dbReference type="ChEBI" id="CHEBI:57841"/>
    </ligand>
</feature>
<feature type="binding site" evidence="1">
    <location>
        <position position="83"/>
    </location>
    <ligand>
        <name>Mg(2+)</name>
        <dbReference type="ChEBI" id="CHEBI:18420"/>
    </ligand>
</feature>
<feature type="binding site" evidence="1">
    <location>
        <position position="102"/>
    </location>
    <ligand>
        <name>Mg(2+)</name>
        <dbReference type="ChEBI" id="CHEBI:18420"/>
    </ligand>
</feature>
<feature type="binding site" evidence="1">
    <location>
        <position position="121"/>
    </location>
    <ligand>
        <name>4-amino-2-methyl-5-(diphosphooxymethyl)pyrimidine</name>
        <dbReference type="ChEBI" id="CHEBI:57841"/>
    </ligand>
</feature>
<feature type="binding site" evidence="1">
    <location>
        <begin position="147"/>
        <end position="149"/>
    </location>
    <ligand>
        <name>2-[(2R,5Z)-2-carboxy-4-methylthiazol-5(2H)-ylidene]ethyl phosphate</name>
        <dbReference type="ChEBI" id="CHEBI:62899"/>
    </ligand>
</feature>
<feature type="binding site" evidence="1">
    <location>
        <position position="150"/>
    </location>
    <ligand>
        <name>4-amino-2-methyl-5-(diphosphooxymethyl)pyrimidine</name>
        <dbReference type="ChEBI" id="CHEBI:57841"/>
    </ligand>
</feature>
<feature type="binding site" evidence="1">
    <location>
        <position position="178"/>
    </location>
    <ligand>
        <name>2-[(2R,5Z)-2-carboxy-4-methylthiazol-5(2H)-ylidene]ethyl phosphate</name>
        <dbReference type="ChEBI" id="CHEBI:62899"/>
    </ligand>
</feature>
<feature type="binding site" evidence="1">
    <location>
        <begin position="198"/>
        <end position="199"/>
    </location>
    <ligand>
        <name>2-[(2R,5Z)-2-carboxy-4-methylthiazol-5(2H)-ylidene]ethyl phosphate</name>
        <dbReference type="ChEBI" id="CHEBI:62899"/>
    </ligand>
</feature>
<evidence type="ECO:0000255" key="1">
    <source>
        <dbReference type="HAMAP-Rule" id="MF_00097"/>
    </source>
</evidence>
<gene>
    <name evidence="1" type="primary">thiE</name>
    <name type="ordered locus">SRU_1552</name>
</gene>
<keyword id="KW-0460">Magnesium</keyword>
<keyword id="KW-0479">Metal-binding</keyword>
<keyword id="KW-1185">Reference proteome</keyword>
<keyword id="KW-0784">Thiamine biosynthesis</keyword>
<keyword id="KW-0808">Transferase</keyword>
<reference key="1">
    <citation type="journal article" date="2005" name="Proc. Natl. Acad. Sci. U.S.A.">
        <title>The genome of Salinibacter ruber: convergence and gene exchange among hyperhalophilic bacteria and archaea.</title>
        <authorList>
            <person name="Mongodin E.F."/>
            <person name="Nelson K.E."/>
            <person name="Daugherty S."/>
            <person name="DeBoy R.T."/>
            <person name="Wister J."/>
            <person name="Khouri H."/>
            <person name="Weidman J."/>
            <person name="Walsh D.A."/>
            <person name="Papke R.T."/>
            <person name="Sanchez Perez G."/>
            <person name="Sharma A.K."/>
            <person name="Nesbo C.L."/>
            <person name="MacLeod D."/>
            <person name="Bapteste E."/>
            <person name="Doolittle W.F."/>
            <person name="Charlebois R.L."/>
            <person name="Legault B."/>
            <person name="Rodriguez-Valera F."/>
        </authorList>
    </citation>
    <scope>NUCLEOTIDE SEQUENCE [LARGE SCALE GENOMIC DNA]</scope>
    <source>
        <strain>DSM 13855 / CECT 5946 / M31</strain>
    </source>
</reference>
<name>THIE_SALRD</name>
<accession>Q2S2A8</accession>
<comment type="function">
    <text evidence="1">Condenses 4-methyl-5-(beta-hydroxyethyl)thiazole monophosphate (THZ-P) and 2-methyl-4-amino-5-hydroxymethyl pyrimidine pyrophosphate (HMP-PP) to form thiamine monophosphate (TMP).</text>
</comment>
<comment type="catalytic activity">
    <reaction evidence="1">
        <text>2-[(2R,5Z)-2-carboxy-4-methylthiazol-5(2H)-ylidene]ethyl phosphate + 4-amino-2-methyl-5-(diphosphooxymethyl)pyrimidine + 2 H(+) = thiamine phosphate + CO2 + diphosphate</text>
        <dbReference type="Rhea" id="RHEA:47844"/>
        <dbReference type="ChEBI" id="CHEBI:15378"/>
        <dbReference type="ChEBI" id="CHEBI:16526"/>
        <dbReference type="ChEBI" id="CHEBI:33019"/>
        <dbReference type="ChEBI" id="CHEBI:37575"/>
        <dbReference type="ChEBI" id="CHEBI:57841"/>
        <dbReference type="ChEBI" id="CHEBI:62899"/>
        <dbReference type="EC" id="2.5.1.3"/>
    </reaction>
</comment>
<comment type="catalytic activity">
    <reaction evidence="1">
        <text>2-(2-carboxy-4-methylthiazol-5-yl)ethyl phosphate + 4-amino-2-methyl-5-(diphosphooxymethyl)pyrimidine + 2 H(+) = thiamine phosphate + CO2 + diphosphate</text>
        <dbReference type="Rhea" id="RHEA:47848"/>
        <dbReference type="ChEBI" id="CHEBI:15378"/>
        <dbReference type="ChEBI" id="CHEBI:16526"/>
        <dbReference type="ChEBI" id="CHEBI:33019"/>
        <dbReference type="ChEBI" id="CHEBI:37575"/>
        <dbReference type="ChEBI" id="CHEBI:57841"/>
        <dbReference type="ChEBI" id="CHEBI:62890"/>
        <dbReference type="EC" id="2.5.1.3"/>
    </reaction>
</comment>
<comment type="catalytic activity">
    <reaction evidence="1">
        <text>4-methyl-5-(2-phosphooxyethyl)-thiazole + 4-amino-2-methyl-5-(diphosphooxymethyl)pyrimidine + H(+) = thiamine phosphate + diphosphate</text>
        <dbReference type="Rhea" id="RHEA:22328"/>
        <dbReference type="ChEBI" id="CHEBI:15378"/>
        <dbReference type="ChEBI" id="CHEBI:33019"/>
        <dbReference type="ChEBI" id="CHEBI:37575"/>
        <dbReference type="ChEBI" id="CHEBI:57841"/>
        <dbReference type="ChEBI" id="CHEBI:58296"/>
        <dbReference type="EC" id="2.5.1.3"/>
    </reaction>
</comment>
<comment type="cofactor">
    <cofactor evidence="1">
        <name>Mg(2+)</name>
        <dbReference type="ChEBI" id="CHEBI:18420"/>
    </cofactor>
    <text evidence="1">Binds 1 Mg(2+) ion per subunit.</text>
</comment>
<comment type="pathway">
    <text evidence="1">Cofactor biosynthesis; thiamine diphosphate biosynthesis; thiamine phosphate from 4-amino-2-methyl-5-diphosphomethylpyrimidine and 4-methyl-5-(2-phosphoethyl)-thiazole: step 1/1.</text>
</comment>
<comment type="similarity">
    <text evidence="1">Belongs to the thiamine-phosphate synthase family.</text>
</comment>
<sequence length="227" mass="23859">MENTSTNGEPARAEKSIGRLHVLTDFHLQQDRSHAELARLAIRGGADTIQFRQKHGGIQNKLLEARKVATVCADASTPLLIDDHLDIAQATDADGVHLGQDDFPIDAARSVLGPSPIIGGTASKPHEAAEAYEQGADYIGFGPVFPTTSKRNPKSVKGPDGLADACEAVPIPVIAIGGITHDRVRSVLEAGAHGVAVLSAVDTARNPEQATARFRAAIDGVLREADS</sequence>
<organism>
    <name type="scientific">Salinibacter ruber (strain DSM 13855 / M31)</name>
    <dbReference type="NCBI Taxonomy" id="309807"/>
    <lineage>
        <taxon>Bacteria</taxon>
        <taxon>Pseudomonadati</taxon>
        <taxon>Rhodothermota</taxon>
        <taxon>Rhodothermia</taxon>
        <taxon>Rhodothermales</taxon>
        <taxon>Salinibacteraceae</taxon>
        <taxon>Salinibacter</taxon>
    </lineage>
</organism>
<proteinExistence type="inferred from homology"/>
<protein>
    <recommendedName>
        <fullName evidence="1">Thiamine-phosphate synthase</fullName>
        <shortName evidence="1">TP synthase</shortName>
        <shortName evidence="1">TPS</shortName>
        <ecNumber evidence="1">2.5.1.3</ecNumber>
    </recommendedName>
    <alternativeName>
        <fullName evidence="1">Thiamine-phosphate pyrophosphorylase</fullName>
        <shortName evidence="1">TMP pyrophosphorylase</shortName>
        <shortName evidence="1">TMP-PPase</shortName>
    </alternativeName>
</protein>
<dbReference type="EC" id="2.5.1.3" evidence="1"/>
<dbReference type="EMBL" id="CP000159">
    <property type="protein sequence ID" value="ABC43834.1"/>
    <property type="molecule type" value="Genomic_DNA"/>
</dbReference>
<dbReference type="RefSeq" id="WP_011404299.1">
    <property type="nucleotide sequence ID" value="NC_007677.1"/>
</dbReference>
<dbReference type="RefSeq" id="YP_445673.1">
    <property type="nucleotide sequence ID" value="NC_007677.1"/>
</dbReference>
<dbReference type="SMR" id="Q2S2A8"/>
<dbReference type="STRING" id="309807.SRU_1552"/>
<dbReference type="EnsemblBacteria" id="ABC43834">
    <property type="protein sequence ID" value="ABC43834"/>
    <property type="gene ID" value="SRU_1552"/>
</dbReference>
<dbReference type="KEGG" id="sru:SRU_1552"/>
<dbReference type="PATRIC" id="fig|309807.25.peg.1606"/>
<dbReference type="eggNOG" id="COG0352">
    <property type="taxonomic scope" value="Bacteria"/>
</dbReference>
<dbReference type="HOGENOM" id="CLU_018272_3_4_10"/>
<dbReference type="OrthoDB" id="9812206at2"/>
<dbReference type="UniPathway" id="UPA00060">
    <property type="reaction ID" value="UER00141"/>
</dbReference>
<dbReference type="Proteomes" id="UP000008674">
    <property type="component" value="Chromosome"/>
</dbReference>
<dbReference type="GO" id="GO:0005737">
    <property type="term" value="C:cytoplasm"/>
    <property type="evidence" value="ECO:0007669"/>
    <property type="project" value="TreeGrafter"/>
</dbReference>
<dbReference type="GO" id="GO:0000287">
    <property type="term" value="F:magnesium ion binding"/>
    <property type="evidence" value="ECO:0007669"/>
    <property type="project" value="UniProtKB-UniRule"/>
</dbReference>
<dbReference type="GO" id="GO:0004789">
    <property type="term" value="F:thiamine-phosphate diphosphorylase activity"/>
    <property type="evidence" value="ECO:0007669"/>
    <property type="project" value="UniProtKB-UniRule"/>
</dbReference>
<dbReference type="GO" id="GO:0009228">
    <property type="term" value="P:thiamine biosynthetic process"/>
    <property type="evidence" value="ECO:0007669"/>
    <property type="project" value="UniProtKB-KW"/>
</dbReference>
<dbReference type="GO" id="GO:0009229">
    <property type="term" value="P:thiamine diphosphate biosynthetic process"/>
    <property type="evidence" value="ECO:0007669"/>
    <property type="project" value="UniProtKB-UniRule"/>
</dbReference>
<dbReference type="CDD" id="cd00564">
    <property type="entry name" value="TMP_TenI"/>
    <property type="match status" value="1"/>
</dbReference>
<dbReference type="FunFam" id="3.20.20.70:FF:000096">
    <property type="entry name" value="Thiamine-phosphate synthase"/>
    <property type="match status" value="1"/>
</dbReference>
<dbReference type="Gene3D" id="3.20.20.70">
    <property type="entry name" value="Aldolase class I"/>
    <property type="match status" value="1"/>
</dbReference>
<dbReference type="HAMAP" id="MF_00097">
    <property type="entry name" value="TMP_synthase"/>
    <property type="match status" value="1"/>
</dbReference>
<dbReference type="InterPro" id="IPR013785">
    <property type="entry name" value="Aldolase_TIM"/>
</dbReference>
<dbReference type="InterPro" id="IPR036206">
    <property type="entry name" value="ThiamineP_synth_sf"/>
</dbReference>
<dbReference type="InterPro" id="IPR022998">
    <property type="entry name" value="ThiamineP_synth_TenI"/>
</dbReference>
<dbReference type="InterPro" id="IPR034291">
    <property type="entry name" value="TMP_synthase"/>
</dbReference>
<dbReference type="NCBIfam" id="TIGR00693">
    <property type="entry name" value="thiE"/>
    <property type="match status" value="1"/>
</dbReference>
<dbReference type="PANTHER" id="PTHR20857">
    <property type="entry name" value="THIAMINE-PHOSPHATE PYROPHOSPHORYLASE"/>
    <property type="match status" value="1"/>
</dbReference>
<dbReference type="PANTHER" id="PTHR20857:SF15">
    <property type="entry name" value="THIAMINE-PHOSPHATE SYNTHASE"/>
    <property type="match status" value="1"/>
</dbReference>
<dbReference type="Pfam" id="PF02581">
    <property type="entry name" value="TMP-TENI"/>
    <property type="match status" value="1"/>
</dbReference>
<dbReference type="SUPFAM" id="SSF51391">
    <property type="entry name" value="Thiamin phosphate synthase"/>
    <property type="match status" value="1"/>
</dbReference>